<dbReference type="EMBL" id="U63145">
    <property type="protein sequence ID" value="AAB07118.1"/>
    <property type="molecule type" value="mRNA"/>
</dbReference>
<dbReference type="SMR" id="Q98905"/>
<dbReference type="GO" id="GO:0072562">
    <property type="term" value="C:blood microparticle"/>
    <property type="evidence" value="ECO:0007669"/>
    <property type="project" value="TreeGrafter"/>
</dbReference>
<dbReference type="GO" id="GO:0031838">
    <property type="term" value="C:haptoglobin-hemoglobin complex"/>
    <property type="evidence" value="ECO:0007669"/>
    <property type="project" value="TreeGrafter"/>
</dbReference>
<dbReference type="GO" id="GO:0005833">
    <property type="term" value="C:hemoglobin complex"/>
    <property type="evidence" value="ECO:0007669"/>
    <property type="project" value="InterPro"/>
</dbReference>
<dbReference type="GO" id="GO:0031720">
    <property type="term" value="F:haptoglobin binding"/>
    <property type="evidence" value="ECO:0007669"/>
    <property type="project" value="TreeGrafter"/>
</dbReference>
<dbReference type="GO" id="GO:0020037">
    <property type="term" value="F:heme binding"/>
    <property type="evidence" value="ECO:0007669"/>
    <property type="project" value="InterPro"/>
</dbReference>
<dbReference type="GO" id="GO:0046872">
    <property type="term" value="F:metal ion binding"/>
    <property type="evidence" value="ECO:0007669"/>
    <property type="project" value="UniProtKB-KW"/>
</dbReference>
<dbReference type="GO" id="GO:0043177">
    <property type="term" value="F:organic acid binding"/>
    <property type="evidence" value="ECO:0007669"/>
    <property type="project" value="TreeGrafter"/>
</dbReference>
<dbReference type="GO" id="GO:0019825">
    <property type="term" value="F:oxygen binding"/>
    <property type="evidence" value="ECO:0007669"/>
    <property type="project" value="InterPro"/>
</dbReference>
<dbReference type="GO" id="GO:0005344">
    <property type="term" value="F:oxygen carrier activity"/>
    <property type="evidence" value="ECO:0007669"/>
    <property type="project" value="UniProtKB-KW"/>
</dbReference>
<dbReference type="GO" id="GO:0004601">
    <property type="term" value="F:peroxidase activity"/>
    <property type="evidence" value="ECO:0007669"/>
    <property type="project" value="TreeGrafter"/>
</dbReference>
<dbReference type="GO" id="GO:0042744">
    <property type="term" value="P:hydrogen peroxide catabolic process"/>
    <property type="evidence" value="ECO:0007669"/>
    <property type="project" value="TreeGrafter"/>
</dbReference>
<dbReference type="CDD" id="cd08925">
    <property type="entry name" value="Hb-beta-like"/>
    <property type="match status" value="1"/>
</dbReference>
<dbReference type="FunFam" id="1.10.490.10:FF:000001">
    <property type="entry name" value="Hemoglobin subunit beta"/>
    <property type="match status" value="1"/>
</dbReference>
<dbReference type="Gene3D" id="1.10.490.10">
    <property type="entry name" value="Globins"/>
    <property type="match status" value="1"/>
</dbReference>
<dbReference type="InterPro" id="IPR000971">
    <property type="entry name" value="Globin"/>
</dbReference>
<dbReference type="InterPro" id="IPR009050">
    <property type="entry name" value="Globin-like_sf"/>
</dbReference>
<dbReference type="InterPro" id="IPR012292">
    <property type="entry name" value="Globin/Proto"/>
</dbReference>
<dbReference type="InterPro" id="IPR002337">
    <property type="entry name" value="Hemoglobin_b"/>
</dbReference>
<dbReference type="InterPro" id="IPR050056">
    <property type="entry name" value="Hemoglobin_oxygen_transport"/>
</dbReference>
<dbReference type="PANTHER" id="PTHR11442">
    <property type="entry name" value="HEMOGLOBIN FAMILY MEMBER"/>
    <property type="match status" value="1"/>
</dbReference>
<dbReference type="PANTHER" id="PTHR11442:SF7">
    <property type="entry name" value="HEMOGLOBIN SUBUNIT EPSILON"/>
    <property type="match status" value="1"/>
</dbReference>
<dbReference type="Pfam" id="PF00042">
    <property type="entry name" value="Globin"/>
    <property type="match status" value="1"/>
</dbReference>
<dbReference type="PRINTS" id="PR00814">
    <property type="entry name" value="BETAHAEM"/>
</dbReference>
<dbReference type="SUPFAM" id="SSF46458">
    <property type="entry name" value="Globin-like"/>
    <property type="match status" value="1"/>
</dbReference>
<dbReference type="PROSITE" id="PS01033">
    <property type="entry name" value="GLOBIN"/>
    <property type="match status" value="1"/>
</dbReference>
<reference key="1">
    <citation type="journal article" date="1997" name="Biochem. Mol. Biol. Int.">
        <title>cDNA-derived amino-acid sequence of a land turtle (Geochelone carbonaria) beta-chain hemoglobin.</title>
        <authorList>
            <person name="Bordin S."/>
            <person name="Meza A.N."/>
            <person name="Saad S.T.O."/>
            <person name="Ogo S.H."/>
            <person name="Costa F.F."/>
        </authorList>
    </citation>
    <scope>NUCLEOTIDE SEQUENCE [MRNA]</scope>
</reference>
<organism>
    <name type="scientific">Chelonoidis carbonarius</name>
    <name type="common">Red-footed tortoise</name>
    <name type="synonym">Geochelone carbonaria</name>
    <dbReference type="NCBI Taxonomy" id="50047"/>
    <lineage>
        <taxon>Eukaryota</taxon>
        <taxon>Metazoa</taxon>
        <taxon>Chordata</taxon>
        <taxon>Craniata</taxon>
        <taxon>Vertebrata</taxon>
        <taxon>Euteleostomi</taxon>
        <taxon>Archelosauria</taxon>
        <taxon>Testudinata</taxon>
        <taxon>Testudines</taxon>
        <taxon>Cryptodira</taxon>
        <taxon>Durocryptodira</taxon>
        <taxon>Testudinoidea</taxon>
        <taxon>Testudinidae</taxon>
        <taxon>Chelonoidis</taxon>
    </lineage>
</organism>
<sequence length="147" mass="16405">MVHWSCEEKQFITSLWAKVNVEEVGGEALARLLIVYPWTQRFFSSFGNLSSPNAILHNAKVLAHGKKVLTSFGEAVKNLDNIKKTFAQLSELHCEKLHVDPENFKLLGNILIIVLATHFPKEFTPASQAAWTKLVNAVAHALALGYH</sequence>
<name>HBB_CHECB</name>
<comment type="function">
    <text>Involved in oxygen transport from the lung to the various peripheral tissues.</text>
</comment>
<comment type="subunit">
    <text evidence="1">Heterotetramer of two alpha-D chains and two beta chains.</text>
</comment>
<comment type="tissue specificity">
    <text>Red blood cells.</text>
</comment>
<comment type="similarity">
    <text evidence="2">Belongs to the globin family.</text>
</comment>
<proteinExistence type="evidence at transcript level"/>
<accession>Q98905</accession>
<evidence type="ECO:0000250" key="1"/>
<evidence type="ECO:0000255" key="2">
    <source>
        <dbReference type="PROSITE-ProRule" id="PRU00238"/>
    </source>
</evidence>
<keyword id="KW-0349">Heme</keyword>
<keyword id="KW-0408">Iron</keyword>
<keyword id="KW-0479">Metal-binding</keyword>
<keyword id="KW-0561">Oxygen transport</keyword>
<keyword id="KW-0813">Transport</keyword>
<protein>
    <recommendedName>
        <fullName>Hemoglobin subunit beta</fullName>
    </recommendedName>
    <alternativeName>
        <fullName>Beta-globin</fullName>
    </alternativeName>
    <alternativeName>
        <fullName>Hemoglobin beta chain</fullName>
    </alternativeName>
</protein>
<feature type="initiator methionine" description="Removed">
    <location>
        <position position="1"/>
    </location>
</feature>
<feature type="chain" id="PRO_0000052962" description="Hemoglobin subunit beta">
    <location>
        <begin position="2"/>
        <end position="147"/>
    </location>
</feature>
<feature type="domain" description="Globin" evidence="2">
    <location>
        <begin position="3"/>
        <end position="147"/>
    </location>
</feature>
<feature type="binding site" description="distal binding residue">
    <location>
        <position position="64"/>
    </location>
    <ligand>
        <name>heme b</name>
        <dbReference type="ChEBI" id="CHEBI:60344"/>
    </ligand>
    <ligandPart>
        <name>Fe</name>
        <dbReference type="ChEBI" id="CHEBI:18248"/>
    </ligandPart>
</feature>
<feature type="binding site" description="proximal binding residue">
    <location>
        <position position="93"/>
    </location>
    <ligand>
        <name>heme b</name>
        <dbReference type="ChEBI" id="CHEBI:60344"/>
    </ligand>
    <ligandPart>
        <name>Fe</name>
        <dbReference type="ChEBI" id="CHEBI:18248"/>
    </ligandPart>
</feature>
<gene>
    <name type="primary">HBB</name>
</gene>